<dbReference type="EC" id="3.6.1.1" evidence="1"/>
<dbReference type="EMBL" id="M23550">
    <property type="protein sequence ID" value="AAB88583.1"/>
    <property type="molecule type" value="Unassigned_DNA"/>
</dbReference>
<dbReference type="EMBL" id="U14003">
    <property type="protein sequence ID" value="AAA97123.1"/>
    <property type="molecule type" value="Genomic_DNA"/>
</dbReference>
<dbReference type="EMBL" id="U00096">
    <property type="protein sequence ID" value="AAC77183.1"/>
    <property type="molecule type" value="Genomic_DNA"/>
</dbReference>
<dbReference type="EMBL" id="AP009048">
    <property type="protein sequence ID" value="BAE78227.1"/>
    <property type="molecule type" value="Genomic_DNA"/>
</dbReference>
<dbReference type="PIR" id="A27648">
    <property type="entry name" value="PWEC"/>
</dbReference>
<dbReference type="RefSeq" id="NP_418647.1">
    <property type="nucleotide sequence ID" value="NC_000913.3"/>
</dbReference>
<dbReference type="RefSeq" id="WP_000055075.1">
    <property type="nucleotide sequence ID" value="NZ_SSUV01000014.1"/>
</dbReference>
<dbReference type="PDB" id="1FAJ">
    <property type="method" value="X-ray"/>
    <property type="resolution" value="2.15 A"/>
    <property type="chains" value="A=2-176"/>
</dbReference>
<dbReference type="PDB" id="1I40">
    <property type="method" value="X-ray"/>
    <property type="resolution" value="1.10 A"/>
    <property type="chains" value="A=2-176"/>
</dbReference>
<dbReference type="PDB" id="1I6T">
    <property type="method" value="X-ray"/>
    <property type="resolution" value="1.20 A"/>
    <property type="chains" value="A=2-176"/>
</dbReference>
<dbReference type="PDB" id="1IGP">
    <property type="method" value="X-ray"/>
    <property type="resolution" value="2.20 A"/>
    <property type="chains" value="A=2-176"/>
</dbReference>
<dbReference type="PDB" id="1INO">
    <property type="method" value="X-ray"/>
    <property type="resolution" value="2.20 A"/>
    <property type="chains" value="A=2-176"/>
</dbReference>
<dbReference type="PDB" id="1IPW">
    <property type="method" value="X-ray"/>
    <property type="resolution" value="2.30 A"/>
    <property type="chains" value="A/B=2-176"/>
</dbReference>
<dbReference type="PDB" id="1JFD">
    <property type="method" value="X-ray"/>
    <property type="resolution" value="2.20 A"/>
    <property type="chains" value="A/B=2-176"/>
</dbReference>
<dbReference type="PDB" id="1MJW">
    <property type="method" value="X-ray"/>
    <property type="resolution" value="1.95 A"/>
    <property type="chains" value="A/B=2-176"/>
</dbReference>
<dbReference type="PDB" id="1MJX">
    <property type="method" value="X-ray"/>
    <property type="resolution" value="2.15 A"/>
    <property type="chains" value="A/B=2-176"/>
</dbReference>
<dbReference type="PDB" id="1MJY">
    <property type="method" value="X-ray"/>
    <property type="resolution" value="2.10 A"/>
    <property type="chains" value="A/B=2-176"/>
</dbReference>
<dbReference type="PDB" id="1MJZ">
    <property type="method" value="X-ray"/>
    <property type="resolution" value="2.20 A"/>
    <property type="chains" value="A=2-176"/>
</dbReference>
<dbReference type="PDB" id="1OBW">
    <property type="method" value="X-ray"/>
    <property type="resolution" value="1.90 A"/>
    <property type="chains" value="A/B/C=2-176"/>
</dbReference>
<dbReference type="PDB" id="2AU6">
    <property type="method" value="X-ray"/>
    <property type="resolution" value="1.20 A"/>
    <property type="chains" value="A=2-176"/>
</dbReference>
<dbReference type="PDB" id="2AU7">
    <property type="method" value="X-ray"/>
    <property type="resolution" value="1.05 A"/>
    <property type="chains" value="A=2-176"/>
</dbReference>
<dbReference type="PDB" id="2AU8">
    <property type="method" value="X-ray"/>
    <property type="resolution" value="1.65 A"/>
    <property type="chains" value="A=2-176"/>
</dbReference>
<dbReference type="PDB" id="2AU9">
    <property type="method" value="X-ray"/>
    <property type="resolution" value="1.30 A"/>
    <property type="chains" value="A=2-176"/>
</dbReference>
<dbReference type="PDB" id="2AUU">
    <property type="method" value="X-ray"/>
    <property type="resolution" value="1.22 A"/>
    <property type="chains" value="A=2-176"/>
</dbReference>
<dbReference type="PDB" id="2EIP">
    <property type="method" value="X-ray"/>
    <property type="resolution" value="2.20 A"/>
    <property type="chains" value="A/B=2-176"/>
</dbReference>
<dbReference type="PDB" id="4UM4">
    <property type="method" value="X-ray"/>
    <property type="resolution" value="2.65 A"/>
    <property type="chains" value="A/B/C=1-176"/>
</dbReference>
<dbReference type="PDBsum" id="1FAJ"/>
<dbReference type="PDBsum" id="1I40"/>
<dbReference type="PDBsum" id="1I6T"/>
<dbReference type="PDBsum" id="1IGP"/>
<dbReference type="PDBsum" id="1INO"/>
<dbReference type="PDBsum" id="1IPW"/>
<dbReference type="PDBsum" id="1JFD"/>
<dbReference type="PDBsum" id="1MJW"/>
<dbReference type="PDBsum" id="1MJX"/>
<dbReference type="PDBsum" id="1MJY"/>
<dbReference type="PDBsum" id="1MJZ"/>
<dbReference type="PDBsum" id="1OBW"/>
<dbReference type="PDBsum" id="2AU6"/>
<dbReference type="PDBsum" id="2AU7"/>
<dbReference type="PDBsum" id="2AU8"/>
<dbReference type="PDBsum" id="2AU9"/>
<dbReference type="PDBsum" id="2AUU"/>
<dbReference type="PDBsum" id="2EIP"/>
<dbReference type="PDBsum" id="4UM4"/>
<dbReference type="SASBDB" id="P0A7A9"/>
<dbReference type="SMR" id="P0A7A9"/>
<dbReference type="BioGRID" id="4259312">
    <property type="interactions" value="55"/>
</dbReference>
<dbReference type="BioGRID" id="853037">
    <property type="interactions" value="1"/>
</dbReference>
<dbReference type="DIP" id="DIP-36217N"/>
<dbReference type="FunCoup" id="P0A7A9">
    <property type="interactions" value="492"/>
</dbReference>
<dbReference type="IntAct" id="P0A7A9">
    <property type="interactions" value="37"/>
</dbReference>
<dbReference type="STRING" id="511145.b4226"/>
<dbReference type="BindingDB" id="P0A7A9"/>
<dbReference type="jPOST" id="P0A7A9"/>
<dbReference type="PaxDb" id="511145-b4226"/>
<dbReference type="EnsemblBacteria" id="AAC77183">
    <property type="protein sequence ID" value="AAC77183"/>
    <property type="gene ID" value="b4226"/>
</dbReference>
<dbReference type="GeneID" id="93777598"/>
<dbReference type="GeneID" id="948748"/>
<dbReference type="KEGG" id="ecj:JW4185"/>
<dbReference type="KEGG" id="eco:b4226"/>
<dbReference type="KEGG" id="ecoc:C3026_22820"/>
<dbReference type="PATRIC" id="fig|1411691.4.peg.2475"/>
<dbReference type="EchoBASE" id="EB0748"/>
<dbReference type="eggNOG" id="COG0221">
    <property type="taxonomic scope" value="Bacteria"/>
</dbReference>
<dbReference type="HOGENOM" id="CLU_073198_1_0_6"/>
<dbReference type="InParanoid" id="P0A7A9"/>
<dbReference type="OMA" id="IHHVSEF"/>
<dbReference type="OrthoDB" id="5187599at2"/>
<dbReference type="PhylomeDB" id="P0A7A9"/>
<dbReference type="BioCyc" id="EcoCyc:INORGPYROPHOSPHAT-MONOMER"/>
<dbReference type="BioCyc" id="MetaCyc:INORGPYROPHOSPHAT-MONOMER"/>
<dbReference type="BRENDA" id="3.6.1.1">
    <property type="organism ID" value="2026"/>
</dbReference>
<dbReference type="EvolutionaryTrace" id="P0A7A9"/>
<dbReference type="PRO" id="PR:P0A7A9"/>
<dbReference type="Proteomes" id="UP000000625">
    <property type="component" value="Chromosome"/>
</dbReference>
<dbReference type="GO" id="GO:0005829">
    <property type="term" value="C:cytosol"/>
    <property type="evidence" value="ECO:0000314"/>
    <property type="project" value="EcoCyc"/>
</dbReference>
<dbReference type="GO" id="GO:0016020">
    <property type="term" value="C:membrane"/>
    <property type="evidence" value="ECO:0007005"/>
    <property type="project" value="UniProtKB"/>
</dbReference>
<dbReference type="GO" id="GO:0004427">
    <property type="term" value="F:inorganic diphosphate phosphatase activity"/>
    <property type="evidence" value="ECO:0000314"/>
    <property type="project" value="EcoCyc"/>
</dbReference>
<dbReference type="GO" id="GO:0050355">
    <property type="term" value="F:inorganic triphosphate phosphatase activity"/>
    <property type="evidence" value="ECO:0000314"/>
    <property type="project" value="EcoCyc"/>
</dbReference>
<dbReference type="GO" id="GO:0000287">
    <property type="term" value="F:magnesium ion binding"/>
    <property type="evidence" value="ECO:0000314"/>
    <property type="project" value="EcoCyc"/>
</dbReference>
<dbReference type="GO" id="GO:0008270">
    <property type="term" value="F:zinc ion binding"/>
    <property type="evidence" value="ECO:0000314"/>
    <property type="project" value="EcoliWiki"/>
</dbReference>
<dbReference type="GO" id="GO:0006796">
    <property type="term" value="P:phosphate-containing compound metabolic process"/>
    <property type="evidence" value="ECO:0000318"/>
    <property type="project" value="GO_Central"/>
</dbReference>
<dbReference type="CDD" id="cd00412">
    <property type="entry name" value="pyrophosphatase"/>
    <property type="match status" value="1"/>
</dbReference>
<dbReference type="FunFam" id="3.90.80.10:FF:000001">
    <property type="entry name" value="Inorganic pyrophosphatase"/>
    <property type="match status" value="1"/>
</dbReference>
<dbReference type="Gene3D" id="3.90.80.10">
    <property type="entry name" value="Inorganic pyrophosphatase"/>
    <property type="match status" value="1"/>
</dbReference>
<dbReference type="HAMAP" id="MF_00209">
    <property type="entry name" value="Inorganic_PPase"/>
    <property type="match status" value="1"/>
</dbReference>
<dbReference type="InterPro" id="IPR008162">
    <property type="entry name" value="Pyrophosphatase"/>
</dbReference>
<dbReference type="InterPro" id="IPR036649">
    <property type="entry name" value="Pyrophosphatase_sf"/>
</dbReference>
<dbReference type="NCBIfam" id="NF002317">
    <property type="entry name" value="PRK01250.1"/>
    <property type="match status" value="1"/>
</dbReference>
<dbReference type="PANTHER" id="PTHR10286">
    <property type="entry name" value="INORGANIC PYROPHOSPHATASE"/>
    <property type="match status" value="1"/>
</dbReference>
<dbReference type="Pfam" id="PF00719">
    <property type="entry name" value="Pyrophosphatase"/>
    <property type="match status" value="1"/>
</dbReference>
<dbReference type="SUPFAM" id="SSF50324">
    <property type="entry name" value="Inorganic pyrophosphatase"/>
    <property type="match status" value="1"/>
</dbReference>
<dbReference type="PROSITE" id="PS00387">
    <property type="entry name" value="PPASE"/>
    <property type="match status" value="1"/>
</dbReference>
<accession>P0A7A9</accession>
<accession>P17288</accession>
<accession>Q2M679</accession>
<sequence length="176" mass="19704">MSLLNVPAGKDLPEDIYVVIEIPANADPIKYEIDKESGALFVDRFMSTAMFYPCNYGYINHTLSLDGDPVDVLVPTPYPLQPGSVIRCRPVGVLKMTDEAGEDAKLVAVPHSKLSKEYDHIKDVNDLPELLKAQIAHFFEHYKDLEKGKWVKVEGWENAEAAKAEIVASFERAKNK</sequence>
<organism>
    <name type="scientific">Escherichia coli (strain K12)</name>
    <dbReference type="NCBI Taxonomy" id="83333"/>
    <lineage>
        <taxon>Bacteria</taxon>
        <taxon>Pseudomonadati</taxon>
        <taxon>Pseudomonadota</taxon>
        <taxon>Gammaproteobacteria</taxon>
        <taxon>Enterobacterales</taxon>
        <taxon>Enterobacteriaceae</taxon>
        <taxon>Escherichia</taxon>
    </lineage>
</organism>
<reference key="1">
    <citation type="journal article" date="1988" name="J. Bacteriol.">
        <title>Cloning and characterization of the gene encoding inorganic pyrophosphatase of Escherichia coli K-12.</title>
        <authorList>
            <person name="Lahti R."/>
            <person name="Pitkaeranta T."/>
            <person name="Valve E."/>
            <person name="Ilta I."/>
            <person name="Kukko-Kalske E."/>
            <person name="Heinonen J."/>
        </authorList>
    </citation>
    <scope>NUCLEOTIDE SEQUENCE [GENOMIC DNA]</scope>
    <source>
        <strain>K12</strain>
    </source>
</reference>
<reference key="2">
    <citation type="journal article" date="1995" name="Nucleic Acids Res.">
        <title>Analysis of the Escherichia coli genome VI: DNA sequence of the region from 92.8 through 100 minutes.</title>
        <authorList>
            <person name="Burland V.D."/>
            <person name="Plunkett G. III"/>
            <person name="Sofia H.J."/>
            <person name="Daniels D.L."/>
            <person name="Blattner F.R."/>
        </authorList>
    </citation>
    <scope>NUCLEOTIDE SEQUENCE [LARGE SCALE GENOMIC DNA]</scope>
    <source>
        <strain>K12 / MG1655 / ATCC 47076</strain>
    </source>
</reference>
<reference key="3">
    <citation type="journal article" date="1997" name="Science">
        <title>The complete genome sequence of Escherichia coli K-12.</title>
        <authorList>
            <person name="Blattner F.R."/>
            <person name="Plunkett G. III"/>
            <person name="Bloch C.A."/>
            <person name="Perna N.T."/>
            <person name="Burland V."/>
            <person name="Riley M."/>
            <person name="Collado-Vides J."/>
            <person name="Glasner J.D."/>
            <person name="Rode C.K."/>
            <person name="Mayhew G.F."/>
            <person name="Gregor J."/>
            <person name="Davis N.W."/>
            <person name="Kirkpatrick H.A."/>
            <person name="Goeden M.A."/>
            <person name="Rose D.J."/>
            <person name="Mau B."/>
            <person name="Shao Y."/>
        </authorList>
    </citation>
    <scope>NUCLEOTIDE SEQUENCE [LARGE SCALE GENOMIC DNA]</scope>
    <source>
        <strain>K12 / MG1655 / ATCC 47076</strain>
    </source>
</reference>
<reference key="4">
    <citation type="journal article" date="2006" name="Mol. Syst. Biol.">
        <title>Highly accurate genome sequences of Escherichia coli K-12 strains MG1655 and W3110.</title>
        <authorList>
            <person name="Hayashi K."/>
            <person name="Morooka N."/>
            <person name="Yamamoto Y."/>
            <person name="Fujita K."/>
            <person name="Isono K."/>
            <person name="Choi S."/>
            <person name="Ohtsubo E."/>
            <person name="Baba T."/>
            <person name="Wanner B.L."/>
            <person name="Mori H."/>
            <person name="Horiuchi T."/>
        </authorList>
    </citation>
    <scope>NUCLEOTIDE SEQUENCE [LARGE SCALE GENOMIC DNA]</scope>
    <source>
        <strain>K12 / W3110 / ATCC 27325 / DSM 5911</strain>
    </source>
</reference>
<reference key="5">
    <citation type="journal article" date="1997" name="Electrophoresis">
        <title>Comparing the predicted and observed properties of proteins encoded in the genome of Escherichia coli K-12.</title>
        <authorList>
            <person name="Link A.J."/>
            <person name="Robison K."/>
            <person name="Church G.M."/>
        </authorList>
    </citation>
    <scope>PROTEIN SEQUENCE OF 2-21 AND 95-106</scope>
    <source>
        <strain>K12 / EMG2</strain>
    </source>
</reference>
<reference key="6">
    <citation type="journal article" date="1990" name="Biochim. Biophys. Acta">
        <title>Conservation of functional residues between yeast and E. coli inorganic pyrophosphatases.</title>
        <authorList>
            <person name="Lahti R."/>
            <person name="Kolakowski L.F. Jr."/>
            <person name="Heinonen J."/>
            <person name="Vihinen M."/>
            <person name="Pohjanoksa K."/>
            <person name="Cooperman B.S."/>
        </authorList>
    </citation>
    <scope>SIMILARITY TO YEAST AND K.LACTIS PPASES</scope>
</reference>
<reference key="7">
    <citation type="journal article" date="1990" name="Biochemistry">
        <title>A site-directed mutagenesis study on Escherichia coli inorganic pyrophosphatase. Glutamic acid-98 and lysine-104 are important for structural integrity, whereas aspartic acids-97 and -102 are essential for catalytic activity.</title>
        <authorList>
            <person name="Lahti R."/>
            <person name="Pohjanoksa K."/>
            <person name="Pitkaeranta T."/>
            <person name="Heikinheimo P."/>
            <person name="Salminen T."/>
            <person name="Meyer P."/>
            <person name="Heinonen J."/>
        </authorList>
    </citation>
    <scope>MUTAGENESIS</scope>
</reference>
<reference key="8">
    <citation type="journal article" date="1991" name="Eur. J. Biochem.">
        <title>Genetic engineering of Escherichia coli inorganic pyrophosphatase. Tyr55 and Tyr141 are important for the structural integrity.</title>
        <authorList>
            <person name="Lahti R."/>
            <person name="Salminen T."/>
            <person name="Latonen S."/>
            <person name="Heikinheimo P."/>
            <person name="Pohjanoksa K."/>
            <person name="Heinonen J."/>
        </authorList>
    </citation>
    <scope>MUTAGENESIS OF TYROSINE RESIDUES</scope>
</reference>
<reference key="9">
    <citation type="journal article" date="1993" name="Int. J. Biochem.">
        <title>Modification of tryptophan 149 of inorganic pyrophosphatase from Escherichia coli.</title>
        <authorList>
            <person name="Kaneko S."/>
            <person name="Ichiba T."/>
            <person name="Hirano N."/>
            <person name="Hachimori A."/>
        </authorList>
    </citation>
    <scope>INACTIVATION</scope>
</reference>
<reference key="10">
    <citation type="journal article" date="1994" name="Protein Eng.">
        <title>The structure of E.coli soluble inorganic pyrophosphatase at 2.7-A resolution.</title>
        <authorList>
            <person name="Kankare J."/>
            <person name="Neal G.S."/>
            <person name="Salminen T."/>
            <person name="Glumhoff T."/>
            <person name="Cooperman B.S."/>
            <person name="Lahti R."/>
            <person name="Goldman A."/>
        </authorList>
    </citation>
    <scope>X-RAY CRYSTALLOGRAPHY (2.7 ANGSTROMS)</scope>
</reference>
<reference key="11">
    <citation type="journal article" date="1994" name="Protein Eng.">
        <authorList>
            <person name="Kankare J."/>
            <person name="Neal G.S."/>
            <person name="Salminen T."/>
            <person name="Glumhoff T."/>
            <person name="Cooperman B.S."/>
            <person name="Lahti R."/>
            <person name="Goldman A."/>
        </authorList>
    </citation>
    <scope>ERRATUM OF PUBMED:7971944</scope>
</reference>
<reference key="12">
    <citation type="journal article" date="1996" name="Biochemistry">
        <title>Crystallographic identification of metal-binding sites in Escherichia coli inorganic pyrophosphatase.</title>
        <authorList>
            <person name="Kankare J."/>
            <person name="Salminen T."/>
            <person name="Lahti R."/>
            <person name="Cooperman B.S."/>
            <person name="Baykov A.A."/>
            <person name="Goldman A."/>
        </authorList>
    </citation>
    <scope>X-RAY CRYSTALLOGRAPHY (2.3 ANGSTROMS)</scope>
</reference>
<reference key="13">
    <citation type="journal article" date="1996" name="Acta Crystallogr. D">
        <title>Structure of Escherichia coli inorganic pyrophosphatase at 2.2-A resolution.</title>
        <authorList>
            <person name="Kankare J."/>
            <person name="Salminen T."/>
            <person name="Lahti R."/>
            <person name="Cooperman B.S."/>
            <person name="Baykov A.A."/>
            <person name="Goldman A."/>
        </authorList>
    </citation>
    <scope>X-RAY CRYSTALLOGRAPHY (2.2 ANGSTROMS)</scope>
</reference>
<reference key="14">
    <citation type="journal article" date="1997" name="FEBS Lett.">
        <title>Crystal structure of Escherichia coli inorganic pyrophosphatase complexed with SO4(2-). Ligand-induced molecular asymmetry.</title>
        <authorList>
            <person name="Avaeva S."/>
            <person name="Kurilova S."/>
            <person name="Nazarova T."/>
            <person name="Rodina E."/>
            <person name="Vorobyeva N."/>
            <person name="Sklyankina V."/>
            <person name="Grigorjeva O."/>
            <person name="Harutyunyan E."/>
            <person name="Oganessyan V."/>
            <person name="Wilson K."/>
            <person name="Dauter Z."/>
            <person name="Huber R."/>
            <person name="Mather T."/>
        </authorList>
    </citation>
    <scope>X-RAY CRYSTALLOGRAPHY (2.15 ANGSTROMS)</scope>
</reference>
<reference key="15">
    <citation type="journal article" date="1997" name="Biochemistry">
        <title>Crystal structure of holo inorganic pyrophosphatase from Escherichia coli at 1.9 A resolution. Mechanism of hydrolysis.</title>
        <authorList>
            <person name="Harutyunyan E.H."/>
            <person name="Oganessyan V.Y."/>
            <person name="Oganessyan N.N."/>
            <person name="Avaeva S.M."/>
            <person name="Nazarova T.I."/>
            <person name="Vorobyeva N.N."/>
            <person name="Kurilova S.A."/>
            <person name="Huber R."/>
            <person name="Mather T."/>
        </authorList>
    </citation>
    <scope>X-RAY CRYSTALLOGRAPHY (1.9 ANGSTROMS)</scope>
</reference>
<name>IPYR_ECOLI</name>
<proteinExistence type="evidence at protein level"/>
<comment type="function">
    <text evidence="1">Catalyzes the hydrolysis of inorganic pyrophosphate (PPi) forming two phosphate ions.</text>
</comment>
<comment type="catalytic activity">
    <reaction evidence="1">
        <text>diphosphate + H2O = 2 phosphate + H(+)</text>
        <dbReference type="Rhea" id="RHEA:24576"/>
        <dbReference type="ChEBI" id="CHEBI:15377"/>
        <dbReference type="ChEBI" id="CHEBI:15378"/>
        <dbReference type="ChEBI" id="CHEBI:33019"/>
        <dbReference type="ChEBI" id="CHEBI:43474"/>
        <dbReference type="EC" id="3.6.1.1"/>
    </reaction>
</comment>
<comment type="cofactor">
    <cofactor evidence="1">
        <name>Mg(2+)</name>
        <dbReference type="ChEBI" id="CHEBI:18420"/>
    </cofactor>
</comment>
<comment type="subunit">
    <text evidence="1">Homohexamer.</text>
</comment>
<comment type="subcellular location">
    <subcellularLocation>
        <location evidence="1">Cytoplasm</location>
    </subcellularLocation>
</comment>
<comment type="similarity">
    <text evidence="1">Belongs to the PPase family.</text>
</comment>
<evidence type="ECO:0000255" key="1">
    <source>
        <dbReference type="HAMAP-Rule" id="MF_00209"/>
    </source>
</evidence>
<evidence type="ECO:0000269" key="2">
    <source>
    </source>
</evidence>
<evidence type="ECO:0007829" key="3">
    <source>
        <dbReference type="PDB" id="1IGP"/>
    </source>
</evidence>
<evidence type="ECO:0007829" key="4">
    <source>
        <dbReference type="PDB" id="1INO"/>
    </source>
</evidence>
<evidence type="ECO:0007829" key="5">
    <source>
        <dbReference type="PDB" id="2AU7"/>
    </source>
</evidence>
<protein>
    <recommendedName>
        <fullName evidence="1">Inorganic pyrophosphatase</fullName>
        <ecNumber evidence="1">3.6.1.1</ecNumber>
    </recommendedName>
    <alternativeName>
        <fullName evidence="1">Pyrophosphate phospho-hydrolase</fullName>
        <shortName evidence="1">PPase</shortName>
    </alternativeName>
</protein>
<feature type="initiator methionine" description="Removed" evidence="2">
    <location>
        <position position="1"/>
    </location>
</feature>
<feature type="chain" id="PRO_0000137495" description="Inorganic pyrophosphatase">
    <location>
        <begin position="2"/>
        <end position="176"/>
    </location>
</feature>
<feature type="binding site" evidence="1">
    <location>
        <position position="30"/>
    </location>
    <ligand>
        <name>substrate</name>
    </ligand>
</feature>
<feature type="binding site" evidence="1">
    <location>
        <position position="44"/>
    </location>
    <ligand>
        <name>substrate</name>
    </ligand>
</feature>
<feature type="binding site" evidence="1">
    <location>
        <position position="56"/>
    </location>
    <ligand>
        <name>substrate</name>
    </ligand>
</feature>
<feature type="binding site" evidence="1">
    <location>
        <position position="66"/>
    </location>
    <ligand>
        <name>Mg(2+)</name>
        <dbReference type="ChEBI" id="CHEBI:18420"/>
        <label>1</label>
    </ligand>
</feature>
<feature type="binding site" evidence="1">
    <location>
        <position position="71"/>
    </location>
    <ligand>
        <name>Mg(2+)</name>
        <dbReference type="ChEBI" id="CHEBI:18420"/>
        <label>1</label>
    </ligand>
</feature>
<feature type="binding site" evidence="1">
    <location>
        <position position="71"/>
    </location>
    <ligand>
        <name>Mg(2+)</name>
        <dbReference type="ChEBI" id="CHEBI:18420"/>
        <label>2</label>
    </ligand>
</feature>
<feature type="binding site" evidence="1">
    <location>
        <position position="103"/>
    </location>
    <ligand>
        <name>Mg(2+)</name>
        <dbReference type="ChEBI" id="CHEBI:18420"/>
        <label>1</label>
    </ligand>
</feature>
<feature type="binding site" evidence="1">
    <location>
        <position position="142"/>
    </location>
    <ligand>
        <name>substrate</name>
    </ligand>
</feature>
<feature type="mutagenesis site" description="16% activity.">
    <original>E</original>
    <variation>D</variation>
    <location>
        <position position="21"/>
    </location>
</feature>
<feature type="mutagenesis site" description="2% activity.">
    <original>K</original>
    <variation>R</variation>
    <location>
        <position position="30"/>
    </location>
</feature>
<feature type="mutagenesis site" description="6% activity.">
    <original>E</original>
    <variation>D</variation>
    <location>
        <position position="32"/>
    </location>
</feature>
<feature type="mutagenesis site" description="10% activity.">
    <original>R</original>
    <variation>K</variation>
    <location>
        <position position="44"/>
    </location>
</feature>
<feature type="mutagenesis site" description="64% activity.">
    <original>Y</original>
    <variation>F</variation>
    <location>
        <position position="52"/>
    </location>
</feature>
<feature type="mutagenesis site" description="7% activity.">
    <original>Y</original>
    <variation>F</variation>
    <location>
        <position position="56"/>
    </location>
</feature>
<feature type="mutagenesis site" description="6% activity.">
    <original>D</original>
    <variation>E</variation>
    <location>
        <position position="66"/>
    </location>
</feature>
<feature type="mutagenesis site" description="1% activity.">
    <original>D</original>
    <variation>E</variation>
    <location>
        <position position="68"/>
    </location>
</feature>
<feature type="mutagenesis site" description="No activity.">
    <original>D</original>
    <variation>E</variation>
    <location>
        <position position="71"/>
    </location>
</feature>
<feature type="mutagenesis site" description="22% activity.">
    <original>D</original>
    <variation>E</variation>
    <location>
        <position position="98"/>
    </location>
</feature>
<feature type="mutagenesis site" description="No activity.">
    <original>D</original>
    <variation>V</variation>
    <location>
        <position position="98"/>
    </location>
</feature>
<feature type="mutagenesis site" description="33% activity.">
    <original>E</original>
    <variation>V</variation>
    <location>
        <position position="99"/>
    </location>
</feature>
<feature type="mutagenesis site" description="3% activity.">
    <original>D</original>
    <variation>E</variation>
    <location>
        <position position="103"/>
    </location>
</feature>
<feature type="mutagenesis site" description="No activity.">
    <original>D</original>
    <variation>V</variation>
    <location>
        <position position="103"/>
    </location>
</feature>
<feature type="mutagenesis site" description="No activity.">
    <original>K</original>
    <variation>I</variation>
    <location>
        <position position="105"/>
    </location>
</feature>
<feature type="mutagenesis site" description="3% activity.">
    <original>K</original>
    <variation>R</variation>
    <location>
        <position position="105"/>
    </location>
</feature>
<feature type="mutagenesis site" description="22% activity.">
    <original>Y</original>
    <variation>F</variation>
    <location>
        <position position="142"/>
    </location>
</feature>
<feature type="helix" evidence="5">
    <location>
        <begin position="3"/>
        <end position="5"/>
    </location>
</feature>
<feature type="strand" evidence="3">
    <location>
        <begin position="8"/>
        <end position="11"/>
    </location>
</feature>
<feature type="turn" evidence="5">
    <location>
        <begin position="12"/>
        <end position="14"/>
    </location>
</feature>
<feature type="strand" evidence="5">
    <location>
        <begin position="15"/>
        <end position="22"/>
    </location>
</feature>
<feature type="strand" evidence="5">
    <location>
        <begin position="28"/>
        <end position="33"/>
    </location>
</feature>
<feature type="turn" evidence="5">
    <location>
        <begin position="35"/>
        <end position="37"/>
    </location>
</feature>
<feature type="strand" evidence="5">
    <location>
        <begin position="40"/>
        <end position="45"/>
    </location>
</feature>
<feature type="strand" evidence="5">
    <location>
        <begin position="47"/>
        <end position="49"/>
    </location>
</feature>
<feature type="strand" evidence="5">
    <location>
        <begin position="53"/>
        <end position="58"/>
    </location>
</feature>
<feature type="strand" evidence="4">
    <location>
        <begin position="65"/>
        <end position="68"/>
    </location>
</feature>
<feature type="strand" evidence="5">
    <location>
        <begin position="71"/>
        <end position="74"/>
    </location>
</feature>
<feature type="strand" evidence="5">
    <location>
        <begin position="85"/>
        <end position="98"/>
    </location>
</feature>
<feature type="strand" evidence="3">
    <location>
        <begin position="99"/>
        <end position="101"/>
    </location>
</feature>
<feature type="strand" evidence="5">
    <location>
        <begin position="105"/>
        <end position="110"/>
    </location>
</feature>
<feature type="turn" evidence="5">
    <location>
        <begin position="112"/>
        <end position="114"/>
    </location>
</feature>
<feature type="turn" evidence="5">
    <location>
        <begin position="117"/>
        <end position="120"/>
    </location>
</feature>
<feature type="helix" evidence="5">
    <location>
        <begin position="124"/>
        <end position="126"/>
    </location>
</feature>
<feature type="helix" evidence="5">
    <location>
        <begin position="129"/>
        <end position="141"/>
    </location>
</feature>
<feature type="turn" evidence="5">
    <location>
        <begin position="142"/>
        <end position="145"/>
    </location>
</feature>
<feature type="strand" evidence="5">
    <location>
        <begin position="151"/>
        <end position="157"/>
    </location>
</feature>
<feature type="helix" evidence="5">
    <location>
        <begin position="159"/>
        <end position="175"/>
    </location>
</feature>
<gene>
    <name evidence="1" type="primary">ppa</name>
    <name type="ordered locus">b4226</name>
    <name type="ordered locus">JW4185</name>
</gene>
<keyword id="KW-0002">3D-structure</keyword>
<keyword id="KW-0963">Cytoplasm</keyword>
<keyword id="KW-0903">Direct protein sequencing</keyword>
<keyword id="KW-0378">Hydrolase</keyword>
<keyword id="KW-0460">Magnesium</keyword>
<keyword id="KW-0479">Metal-binding</keyword>
<keyword id="KW-1185">Reference proteome</keyword>